<protein>
    <recommendedName>
        <fullName evidence="1">Capsid protein</fullName>
    </recommendedName>
    <alternativeName>
        <fullName evidence="1">Core antigen</fullName>
    </alternativeName>
    <alternativeName>
        <fullName evidence="1">Core protein</fullName>
    </alternativeName>
    <alternativeName>
        <fullName evidence="1">HBcAg</fullName>
    </alternativeName>
    <alternativeName>
        <fullName evidence="1">p21.5</fullName>
    </alternativeName>
</protein>
<comment type="function">
    <text evidence="1">Self assembles to form an icosahedral capsid. Most capsids appear to be large particles with an icosahedral symmetry of T=4 and consist of 240 copies of capsid protein, though a fraction forms smaller T=3 particles consisting of 180 capsid proteins. Entering capsids are transported along microtubules to the nucleus. Phosphorylation of the capsid is thought to induce exposure of nuclear localization signal in the C-terminal portion of the capsid protein that allows binding to the nuclear pore complex via the importin (karyopherin-) alpha and beta. Capsids are imported in intact form through the nuclear pore into the nuclear basket, where it probably binds NUP153. Only capsids that contain the mature viral genome can release the viral DNA and capsid protein into the nucleoplasm. Immature capsids get stuck in the basket. Capsids encapsulate the pre-genomic RNA and the P protein. Pre-genomic RNA is reverse-transcribed into DNA while the capsid is still in the cytoplasm. The capsid can then either be directed to the nucleus, providing more genomes for transcription, or bud through the endoplasmic reticulum to provide new virions.</text>
</comment>
<comment type="subunit">
    <text evidence="1">Homodimerizes, then multimerizes. Interacts with cytosol exposed regions of viral L glycoprotein present in the reticulum-to-Golgi compartment. Interacts with human FLNB. Phosphorylated form interacts with host importin alpha; this interaction depends on the exposure of the NLS, which itself depends upon genome maturation and/or phosphorylation of the capsid protein. Interacts with host NUP153.</text>
</comment>
<comment type="subcellular location">
    <subcellularLocation>
        <location evidence="1">Virion</location>
    </subcellularLocation>
    <subcellularLocation>
        <location evidence="1">Host cytoplasm</location>
    </subcellularLocation>
</comment>
<comment type="alternative products">
    <event type="alternative initiation"/>
    <isoform>
        <id>P17392-1</id>
        <name>Capsid protein</name>
        <sequence type="displayed"/>
    </isoform>
    <isoform>
        <id>P0C6G9-1</id>
        <name>External core antigen</name>
        <sequence type="external"/>
    </isoform>
</comment>
<comment type="PTM">
    <text evidence="1">Phosphorylated by host SRPK1, SRPK2, and maybe protein kinase C or GAPDH. Phosphorylation is critical for pregenomic RNA packaging. Protein kinase C phosphorylation is stimulated by HBx protein and may play a role in transport of the viral genome to the nucleus at the late step during the viral replication cycle.</text>
</comment>
<comment type="similarity">
    <text evidence="1">Belongs to the orthohepadnavirus core antigen family.</text>
</comment>
<feature type="chain" id="PRO_0000222317" description="Capsid protein">
    <location>
        <begin position="1"/>
        <end position="183"/>
    </location>
</feature>
<feature type="repeat" description="1; half-length">
    <location>
        <begin position="155"/>
        <end position="161"/>
    </location>
</feature>
<feature type="repeat" description="2">
    <location>
        <begin position="162"/>
        <end position="169"/>
    </location>
</feature>
<feature type="repeat" description="3">
    <location>
        <begin position="170"/>
        <end position="177"/>
    </location>
</feature>
<feature type="region of interest" description="Disordered" evidence="2">
    <location>
        <begin position="136"/>
        <end position="183"/>
    </location>
</feature>
<feature type="region of interest" description="3 X 8 AA repeats of S-P-R-R-R-[PR]-S-Q">
    <location>
        <begin position="155"/>
        <end position="177"/>
    </location>
</feature>
<feature type="region of interest" description="RNA binding" evidence="1">
    <location>
        <begin position="177"/>
        <end position="183"/>
    </location>
</feature>
<feature type="short sequence motif" description="Bipartite nuclear localization signal" evidence="1">
    <location>
        <begin position="158"/>
        <end position="175"/>
    </location>
</feature>
<feature type="compositionally biased region" description="Basic residues" evidence="2">
    <location>
        <begin position="149"/>
        <end position="176"/>
    </location>
</feature>
<feature type="modified residue" description="Phosphoserine; by host" evidence="1">
    <location>
        <position position="155"/>
    </location>
</feature>
<feature type="modified residue" description="Phosphoserine; by host" evidence="1">
    <location>
        <position position="162"/>
    </location>
</feature>
<feature type="modified residue" description="Phosphoserine; by host" evidence="1">
    <location>
        <position position="170"/>
    </location>
</feature>
<gene>
    <name evidence="1" type="primary">C</name>
</gene>
<organism>
    <name type="scientific">Hepatitis B virus genotype B/C subtype adw (isolate Okinawa/pODW282/1998)</name>
    <name type="common">HBV-B</name>
    <dbReference type="NCBI Taxonomy" id="10415"/>
    <lineage>
        <taxon>Viruses</taxon>
        <taxon>Riboviria</taxon>
        <taxon>Pararnavirae</taxon>
        <taxon>Artverviricota</taxon>
        <taxon>Revtraviricetes</taxon>
        <taxon>Blubervirales</taxon>
        <taxon>Hepadnaviridae</taxon>
        <taxon>Orthohepadnavirus</taxon>
        <taxon>Hepatitis B virus</taxon>
    </lineage>
</organism>
<proteinExistence type="inferred from homology"/>
<accession>P17392</accession>
<reference key="1">
    <citation type="journal article" date="1988" name="J. Gen. Virol.">
        <title>Typing hepatitis B virus by homology in nucleotide sequence: comparison of surface antigen subtypes.</title>
        <authorList>
            <person name="Okamoto H."/>
            <person name="Tsuda F."/>
            <person name="Sakugawa H."/>
            <person name="Sastrosoewignjo R.I."/>
            <person name="Imai M."/>
            <person name="Miyakawa Y."/>
            <person name="Mayumi M."/>
        </authorList>
    </citation>
    <scope>NUCLEOTIDE SEQUENCE [GENOMIC DNA]</scope>
</reference>
<keyword id="KW-0024">Alternative initiation</keyword>
<keyword id="KW-0167">Capsid protein</keyword>
<keyword id="KW-1176">Cytoplasmic inwards viral transport</keyword>
<keyword id="KW-0238">DNA-binding</keyword>
<keyword id="KW-1035">Host cytoplasm</keyword>
<keyword id="KW-0945">Host-virus interaction</keyword>
<keyword id="KW-1177">Microtubular inwards viral transport</keyword>
<keyword id="KW-0597">Phosphoprotein</keyword>
<keyword id="KW-0677">Repeat</keyword>
<keyword id="KW-0694">RNA-binding</keyword>
<keyword id="KW-1144">T=4 icosahedral capsid protein</keyword>
<keyword id="KW-1163">Viral penetration into host nucleus</keyword>
<keyword id="KW-0946">Virion</keyword>
<keyword id="KW-1160">Virus entry into host cell</keyword>
<dbReference type="EMBL" id="D00330">
    <property type="status" value="NOT_ANNOTATED_CDS"/>
    <property type="molecule type" value="Genomic_DNA"/>
</dbReference>
<dbReference type="PIR" id="B28925">
    <property type="entry name" value="NKVLJ2"/>
</dbReference>
<dbReference type="SMR" id="P17392"/>
<dbReference type="Proteomes" id="UP000007916">
    <property type="component" value="Genome"/>
</dbReference>
<dbReference type="GO" id="GO:0043657">
    <property type="term" value="C:host cell"/>
    <property type="evidence" value="ECO:0007669"/>
    <property type="project" value="GOC"/>
</dbReference>
<dbReference type="GO" id="GO:0030430">
    <property type="term" value="C:host cell cytoplasm"/>
    <property type="evidence" value="ECO:0007669"/>
    <property type="project" value="UniProtKB-SubCell"/>
</dbReference>
<dbReference type="GO" id="GO:0039619">
    <property type="term" value="C:T=4 icosahedral viral capsid"/>
    <property type="evidence" value="ECO:0007669"/>
    <property type="project" value="UniProtKB-UniRule"/>
</dbReference>
<dbReference type="GO" id="GO:0003677">
    <property type="term" value="F:DNA binding"/>
    <property type="evidence" value="ECO:0007669"/>
    <property type="project" value="UniProtKB-UniRule"/>
</dbReference>
<dbReference type="GO" id="GO:0003723">
    <property type="term" value="F:RNA binding"/>
    <property type="evidence" value="ECO:0007669"/>
    <property type="project" value="UniProtKB-UniRule"/>
</dbReference>
<dbReference type="GO" id="GO:0005198">
    <property type="term" value="F:structural molecule activity"/>
    <property type="evidence" value="ECO:0007669"/>
    <property type="project" value="UniProtKB-UniRule"/>
</dbReference>
<dbReference type="GO" id="GO:0075521">
    <property type="term" value="P:microtubule-dependent intracellular transport of viral material towards nucleus"/>
    <property type="evidence" value="ECO:0007669"/>
    <property type="project" value="UniProtKB-UniRule"/>
</dbReference>
<dbReference type="GO" id="GO:0046718">
    <property type="term" value="P:symbiont entry into host cell"/>
    <property type="evidence" value="ECO:0007669"/>
    <property type="project" value="UniProtKB-UniRule"/>
</dbReference>
<dbReference type="GO" id="GO:0075732">
    <property type="term" value="P:viral penetration into host nucleus"/>
    <property type="evidence" value="ECO:0007669"/>
    <property type="project" value="UniProtKB-UniRule"/>
</dbReference>
<dbReference type="FunFam" id="1.10.4090.10:FF:000001">
    <property type="entry name" value="Capsid protein"/>
    <property type="match status" value="1"/>
</dbReference>
<dbReference type="Gene3D" id="1.10.4090.10">
    <property type="entry name" value="Viral capsid, core domain supefamily, Hepatitis B virus"/>
    <property type="match status" value="1"/>
</dbReference>
<dbReference type="HAMAP" id="MF_04076">
    <property type="entry name" value="HBV_HBEAG"/>
    <property type="match status" value="1"/>
</dbReference>
<dbReference type="InterPro" id="IPR002006">
    <property type="entry name" value="Hepatitis_core"/>
</dbReference>
<dbReference type="InterPro" id="IPR036459">
    <property type="entry name" value="Viral_capsid_core_dom_sf_HBV"/>
</dbReference>
<dbReference type="Pfam" id="PF00906">
    <property type="entry name" value="Hepatitis_core"/>
    <property type="match status" value="3"/>
</dbReference>
<dbReference type="SUPFAM" id="SSF47852">
    <property type="entry name" value="Hepatitis B viral capsid (hbcag)"/>
    <property type="match status" value="1"/>
</dbReference>
<sequence length="183" mass="21081">MDIDPYKEFGASVELLSFLPSDFFPSVRDLLDTASALYREALESPEHCSPHHTALRQAILCWGELMNLATWVGSNLEDPASRELVVSYVNVNMGLKIRQLLWFHISCLTFGRETVLEYLVSFGVWIRTPPAYRPPNAPILSTLPETTVVRRRGRSPRRRTPSPRRRRSQSPRRRRSQSRESQC</sequence>
<evidence type="ECO:0000255" key="1">
    <source>
        <dbReference type="HAMAP-Rule" id="MF_04076"/>
    </source>
</evidence>
<evidence type="ECO:0000256" key="2">
    <source>
        <dbReference type="SAM" id="MobiDB-lite"/>
    </source>
</evidence>
<name>CAPSD_HBVB4</name>
<organismHost>
    <name type="scientific">Homo sapiens</name>
    <name type="common">Human</name>
    <dbReference type="NCBI Taxonomy" id="9606"/>
</organismHost>
<organismHost>
    <name type="scientific">Pan troglodytes</name>
    <name type="common">Chimpanzee</name>
    <dbReference type="NCBI Taxonomy" id="9598"/>
</organismHost>